<accession>B6J3R8</accession>
<name>METE_COXB2</name>
<gene>
    <name evidence="1" type="primary">metE</name>
    <name type="ordered locus">CbuG_2053</name>
</gene>
<feature type="chain" id="PRO_1000097823" description="5-methyltetrahydropteroyltriglutamate--homocysteine methyltransferase">
    <location>
        <begin position="1"/>
        <end position="775"/>
    </location>
</feature>
<feature type="active site" description="Proton donor" evidence="1">
    <location>
        <position position="698"/>
    </location>
</feature>
<feature type="binding site" evidence="1">
    <location>
        <begin position="16"/>
        <end position="19"/>
    </location>
    <ligand>
        <name>5-methyltetrahydropteroyltri-L-glutamate</name>
        <dbReference type="ChEBI" id="CHEBI:58207"/>
    </ligand>
</feature>
<feature type="binding site" evidence="1">
    <location>
        <position position="115"/>
    </location>
    <ligand>
        <name>5-methyltetrahydropteroyltri-L-glutamate</name>
        <dbReference type="ChEBI" id="CHEBI:58207"/>
    </ligand>
</feature>
<feature type="binding site" evidence="1">
    <location>
        <begin position="435"/>
        <end position="437"/>
    </location>
    <ligand>
        <name>L-homocysteine</name>
        <dbReference type="ChEBI" id="CHEBI:58199"/>
    </ligand>
</feature>
<feature type="binding site" evidence="1">
    <location>
        <begin position="435"/>
        <end position="437"/>
    </location>
    <ligand>
        <name>L-methionine</name>
        <dbReference type="ChEBI" id="CHEBI:57844"/>
    </ligand>
</feature>
<feature type="binding site" evidence="1">
    <location>
        <position position="488"/>
    </location>
    <ligand>
        <name>L-homocysteine</name>
        <dbReference type="ChEBI" id="CHEBI:58199"/>
    </ligand>
</feature>
<feature type="binding site" evidence="1">
    <location>
        <position position="488"/>
    </location>
    <ligand>
        <name>L-methionine</name>
        <dbReference type="ChEBI" id="CHEBI:57844"/>
    </ligand>
</feature>
<feature type="binding site" evidence="1">
    <location>
        <begin position="519"/>
        <end position="520"/>
    </location>
    <ligand>
        <name>5-methyltetrahydropteroyltri-L-glutamate</name>
        <dbReference type="ChEBI" id="CHEBI:58207"/>
    </ligand>
</feature>
<feature type="binding site" evidence="1">
    <location>
        <position position="565"/>
    </location>
    <ligand>
        <name>5-methyltetrahydropteroyltri-L-glutamate</name>
        <dbReference type="ChEBI" id="CHEBI:58207"/>
    </ligand>
</feature>
<feature type="binding site" evidence="1">
    <location>
        <position position="603"/>
    </location>
    <ligand>
        <name>L-homocysteine</name>
        <dbReference type="ChEBI" id="CHEBI:58199"/>
    </ligand>
</feature>
<feature type="binding site" evidence="1">
    <location>
        <position position="603"/>
    </location>
    <ligand>
        <name>L-methionine</name>
        <dbReference type="ChEBI" id="CHEBI:57844"/>
    </ligand>
</feature>
<feature type="binding site" evidence="1">
    <location>
        <position position="609"/>
    </location>
    <ligand>
        <name>5-methyltetrahydropteroyltri-L-glutamate</name>
        <dbReference type="ChEBI" id="CHEBI:58207"/>
    </ligand>
</feature>
<feature type="binding site" evidence="1">
    <location>
        <position position="645"/>
    </location>
    <ligand>
        <name>Zn(2+)</name>
        <dbReference type="ChEBI" id="CHEBI:29105"/>
        <note>catalytic</note>
    </ligand>
</feature>
<feature type="binding site" evidence="1">
    <location>
        <position position="647"/>
    </location>
    <ligand>
        <name>Zn(2+)</name>
        <dbReference type="ChEBI" id="CHEBI:29105"/>
        <note>catalytic</note>
    </ligand>
</feature>
<feature type="binding site" evidence="1">
    <location>
        <position position="669"/>
    </location>
    <ligand>
        <name>Zn(2+)</name>
        <dbReference type="ChEBI" id="CHEBI:29105"/>
        <note>catalytic</note>
    </ligand>
</feature>
<feature type="binding site" evidence="1">
    <location>
        <position position="730"/>
    </location>
    <ligand>
        <name>Zn(2+)</name>
        <dbReference type="ChEBI" id="CHEBI:29105"/>
        <note>catalytic</note>
    </ligand>
</feature>
<comment type="function">
    <text evidence="1">Catalyzes the transfer of a methyl group from 5-methyltetrahydrofolate to homocysteine resulting in methionine formation.</text>
</comment>
<comment type="catalytic activity">
    <reaction evidence="1">
        <text>5-methyltetrahydropteroyltri-L-glutamate + L-homocysteine = tetrahydropteroyltri-L-glutamate + L-methionine</text>
        <dbReference type="Rhea" id="RHEA:21196"/>
        <dbReference type="ChEBI" id="CHEBI:57844"/>
        <dbReference type="ChEBI" id="CHEBI:58140"/>
        <dbReference type="ChEBI" id="CHEBI:58199"/>
        <dbReference type="ChEBI" id="CHEBI:58207"/>
        <dbReference type="EC" id="2.1.1.14"/>
    </reaction>
</comment>
<comment type="cofactor">
    <cofactor evidence="1">
        <name>Zn(2+)</name>
        <dbReference type="ChEBI" id="CHEBI:29105"/>
    </cofactor>
    <text evidence="1">Binds 1 zinc ion per subunit.</text>
</comment>
<comment type="pathway">
    <text evidence="1">Amino-acid biosynthesis; L-methionine biosynthesis via de novo pathway; L-methionine from L-homocysteine (MetE route): step 1/1.</text>
</comment>
<comment type="similarity">
    <text evidence="1">Belongs to the vitamin-B12 independent methionine synthase family.</text>
</comment>
<sequence length="775" mass="88390">MVYAHNLGFPRIGIKREMKKTVEAYWRGEISQQQLQQQAIELQLTNWKIQAEAGVDLIPVGDFSWYDHVLDMAVRVGAIPSRFKALNSNITDTMFCTARGQAPNGIETSACEMTKWFDTNYHYIVPEFTTNQSFELHHDDLFKSTKLALENNYRAKPVILGPLSFLWLGKCKGESFNKLLLLEKLLPVYAEIFEQLSSLGVEWVQVDEPILVLDLPPEWQQAFLTTYQQLNFFNLKCLLATYFGSLDDNLSLTCQLPVDGLHIDYCRAPDQLDSVLSQLPAEKILSVGIVDGRNIWCNDLNRSLTLLENIQSSLGDRLWVAPSCSLLHVPIDLDQENKLDVELKSWFAFAKQKVAEAAFLTRGLREGRESIGAELKKNEEVIISRKTSKRIHNPNVEKKAASVNERLMRRQHEHSIRKNKQTAQLNLPLFPTTTIGSFPQTSKIRCLRRDYKQGKIDDALYEEKIRQEIAEVIGIQVKLGLDVLVHGEPERNDMVEYFGELLDGIAITSNGWVQSYGSRCVKPPIIFGDVSRERPMTLRWIEYAQSLTTKSVKGMLTGPVTILAWSFVRDDQPRSQTAKQIALALRDEVQDLERSGVRVIQIDEPAFRECLPLRKAAWQDYLEWAVKCFRLASCGVKDETQIHTHMCYSEFNDIIEAIAALDADVITIESSRSEMEILKSFEKFAYPNDIGPGIYDIHSPRIPRVAEIEELAVRALQYIPIERLWINPDCGLKTRNWEETKEALSRMVDAAKHLRKAFSSEKTPTIDLELQPAST</sequence>
<keyword id="KW-0028">Amino-acid biosynthesis</keyword>
<keyword id="KW-0479">Metal-binding</keyword>
<keyword id="KW-0486">Methionine biosynthesis</keyword>
<keyword id="KW-0489">Methyltransferase</keyword>
<keyword id="KW-0677">Repeat</keyword>
<keyword id="KW-0808">Transferase</keyword>
<keyword id="KW-0862">Zinc</keyword>
<reference key="1">
    <citation type="journal article" date="2009" name="Infect. Immun.">
        <title>Comparative genomics reveal extensive transposon-mediated genomic plasticity and diversity among potential effector proteins within the genus Coxiella.</title>
        <authorList>
            <person name="Beare P.A."/>
            <person name="Unsworth N."/>
            <person name="Andoh M."/>
            <person name="Voth D.E."/>
            <person name="Omsland A."/>
            <person name="Gilk S.D."/>
            <person name="Williams K.P."/>
            <person name="Sobral B.W."/>
            <person name="Kupko J.J. III"/>
            <person name="Porcella S.F."/>
            <person name="Samuel J.E."/>
            <person name="Heinzen R.A."/>
        </authorList>
    </citation>
    <scope>NUCLEOTIDE SEQUENCE [LARGE SCALE GENOMIC DNA]</scope>
    <source>
        <strain>CbuG_Q212</strain>
    </source>
</reference>
<dbReference type="EC" id="2.1.1.14" evidence="1"/>
<dbReference type="EMBL" id="CP001019">
    <property type="protein sequence ID" value="ACJ19290.1"/>
    <property type="molecule type" value="Genomic_DNA"/>
</dbReference>
<dbReference type="RefSeq" id="WP_012570540.1">
    <property type="nucleotide sequence ID" value="NC_011527.1"/>
</dbReference>
<dbReference type="SMR" id="B6J3R8"/>
<dbReference type="KEGG" id="cbg:CbuG_2053"/>
<dbReference type="HOGENOM" id="CLU_013175_0_0_6"/>
<dbReference type="UniPathway" id="UPA00051">
    <property type="reaction ID" value="UER00082"/>
</dbReference>
<dbReference type="GO" id="GO:0003871">
    <property type="term" value="F:5-methyltetrahydropteroyltriglutamate-homocysteine S-methyltransferase activity"/>
    <property type="evidence" value="ECO:0007669"/>
    <property type="project" value="UniProtKB-UniRule"/>
</dbReference>
<dbReference type="GO" id="GO:0008270">
    <property type="term" value="F:zinc ion binding"/>
    <property type="evidence" value="ECO:0007669"/>
    <property type="project" value="InterPro"/>
</dbReference>
<dbReference type="GO" id="GO:0009086">
    <property type="term" value="P:methionine biosynthetic process"/>
    <property type="evidence" value="ECO:0007669"/>
    <property type="project" value="UniProtKB-UniRule"/>
</dbReference>
<dbReference type="GO" id="GO:0032259">
    <property type="term" value="P:methylation"/>
    <property type="evidence" value="ECO:0007669"/>
    <property type="project" value="UniProtKB-KW"/>
</dbReference>
<dbReference type="CDD" id="cd03311">
    <property type="entry name" value="CIMS_C_terminal_like"/>
    <property type="match status" value="1"/>
</dbReference>
<dbReference type="CDD" id="cd03312">
    <property type="entry name" value="CIMS_N_terminal_like"/>
    <property type="match status" value="1"/>
</dbReference>
<dbReference type="FunFam" id="3.20.20.210:FF:000002">
    <property type="entry name" value="5-methyltetrahydropteroyltriglutamate--homocysteine methyltransferase"/>
    <property type="match status" value="1"/>
</dbReference>
<dbReference type="FunFam" id="3.20.20.210:FF:000003">
    <property type="entry name" value="5-methyltetrahydropteroyltriglutamate--homocysteine methyltransferase"/>
    <property type="match status" value="1"/>
</dbReference>
<dbReference type="Gene3D" id="3.20.20.210">
    <property type="match status" value="2"/>
</dbReference>
<dbReference type="HAMAP" id="MF_00172">
    <property type="entry name" value="Meth_synth"/>
    <property type="match status" value="1"/>
</dbReference>
<dbReference type="InterPro" id="IPR013215">
    <property type="entry name" value="Cbl-indep_Met_Synth_N"/>
</dbReference>
<dbReference type="InterPro" id="IPR006276">
    <property type="entry name" value="Cobalamin-indep_Met_synthase"/>
</dbReference>
<dbReference type="InterPro" id="IPR002629">
    <property type="entry name" value="Met_Synth_C/arc"/>
</dbReference>
<dbReference type="InterPro" id="IPR038071">
    <property type="entry name" value="UROD/MetE-like_sf"/>
</dbReference>
<dbReference type="NCBIfam" id="TIGR01371">
    <property type="entry name" value="met_syn_B12ind"/>
    <property type="match status" value="1"/>
</dbReference>
<dbReference type="NCBIfam" id="NF003556">
    <property type="entry name" value="PRK05222.1"/>
    <property type="match status" value="1"/>
</dbReference>
<dbReference type="PANTHER" id="PTHR30519">
    <property type="entry name" value="5-METHYLTETRAHYDROPTEROYLTRIGLUTAMATE--HOMOCYSTEINE METHYLTRANSFERASE"/>
    <property type="match status" value="1"/>
</dbReference>
<dbReference type="Pfam" id="PF08267">
    <property type="entry name" value="Meth_synt_1"/>
    <property type="match status" value="1"/>
</dbReference>
<dbReference type="Pfam" id="PF01717">
    <property type="entry name" value="Meth_synt_2"/>
    <property type="match status" value="1"/>
</dbReference>
<dbReference type="PIRSF" id="PIRSF000382">
    <property type="entry name" value="MeTrfase_B12_ind"/>
    <property type="match status" value="1"/>
</dbReference>
<dbReference type="SUPFAM" id="SSF51726">
    <property type="entry name" value="UROD/MetE-like"/>
    <property type="match status" value="2"/>
</dbReference>
<evidence type="ECO:0000255" key="1">
    <source>
        <dbReference type="HAMAP-Rule" id="MF_00172"/>
    </source>
</evidence>
<organism>
    <name type="scientific">Coxiella burnetii (strain CbuG_Q212)</name>
    <name type="common">Coxiella burnetii (strain Q212)</name>
    <dbReference type="NCBI Taxonomy" id="434923"/>
    <lineage>
        <taxon>Bacteria</taxon>
        <taxon>Pseudomonadati</taxon>
        <taxon>Pseudomonadota</taxon>
        <taxon>Gammaproteobacteria</taxon>
        <taxon>Legionellales</taxon>
        <taxon>Coxiellaceae</taxon>
        <taxon>Coxiella</taxon>
    </lineage>
</organism>
<proteinExistence type="inferred from homology"/>
<protein>
    <recommendedName>
        <fullName evidence="1">5-methyltetrahydropteroyltriglutamate--homocysteine methyltransferase</fullName>
        <ecNumber evidence="1">2.1.1.14</ecNumber>
    </recommendedName>
    <alternativeName>
        <fullName evidence="1">Cobalamin-independent methionine synthase</fullName>
    </alternativeName>
    <alternativeName>
        <fullName evidence="1">Methionine synthase, vitamin-B12 independent isozyme</fullName>
    </alternativeName>
</protein>